<keyword id="KW-0067">ATP-binding</keyword>
<keyword id="KW-0963">Cytoplasm</keyword>
<keyword id="KW-0378">Hydrolase</keyword>
<keyword id="KW-0547">Nucleotide-binding</keyword>
<keyword id="KW-0645">Protease</keyword>
<keyword id="KW-1185">Reference proteome</keyword>
<keyword id="KW-0720">Serine protease</keyword>
<keyword id="KW-0346">Stress response</keyword>
<sequence length="816" mass="90910">MSKSDQEHTTTEPTIVAEEELRIPELLPLLPIRDVVVYPFMIIPLFVGREMSIKAVDQALAGDRMIMLATQHDIGDEDPTPDKIYNVGTVAMIMRMLKLPDGRVKILVQGLVKARIAEFVEFKPFHTVRIERLVEPVAVDNLETEALMRTVREQLAKIAELGKQISPEVMVILENITDPGSMADLIASNLGLKLSEAQMLLEIEDPVRRLTKVNDLLAREHEMLSVQAQIQNAAREEMGKNQKEYYLREQMKAIQQELGDHDGKEELEELRKAIETARMPENVEKEALKQLGRLERMHGDSGEAGVIRTYLDWLIEIPWSKTTRDSLDIIRAKKILDEDHSYLDKVKERILEFLAVRKLNKQMKGPILCFVGPPGVGKTSLGKSIARALNRKFVRISLGGVRDEAEIRGHRRTYLGALPGRIIQGMKQAGTRNPVFMLDELDKLGYDYKGDPSAALLEVLDPQQNNAFSDHYVNLPYDLSNVLFVATANHSDPIPSALFDRMEVINIPGYTEEEKLEIAIRYLVPRQMKDNGLKAKHIVFEEEALKEIIAKYTREAGLRNLEREIGNVCRKVARKIAEGHKRQIRVTPAAVATFLGAAKFLRDDEMDKNEVGVVNGLAWTSVGGEVLHIEATTMAGKGGMALTGQLGDVMKESVQAALAYIRSHGSEFHINPDWFQENEIHVHVPAGAVPKDGPSAGCAMATALISVLTKVPVKKDVAMTGEISLRGKVLPIGGLKEKILAAVRAGMKMVIIPEQNRKDLEDIPKAMQKKVKIVPVKEIDEVLKLALEKFPIPAPKGKAKPATPKVVVRPSKEISA</sequence>
<organism>
    <name type="scientific">Trichlorobacter lovleyi (strain ATCC BAA-1151 / DSM 17278 / SZ)</name>
    <name type="common">Geobacter lovleyi</name>
    <dbReference type="NCBI Taxonomy" id="398767"/>
    <lineage>
        <taxon>Bacteria</taxon>
        <taxon>Pseudomonadati</taxon>
        <taxon>Thermodesulfobacteriota</taxon>
        <taxon>Desulfuromonadia</taxon>
        <taxon>Geobacterales</taxon>
        <taxon>Geobacteraceae</taxon>
        <taxon>Trichlorobacter</taxon>
    </lineage>
</organism>
<comment type="function">
    <text evidence="1">ATP-dependent serine protease that mediates the selective degradation of mutant and abnormal proteins as well as certain short-lived regulatory proteins. Required for cellular homeostasis and for survival from DNA damage and developmental changes induced by stress. Degrades polypeptides processively to yield small peptide fragments that are 5 to 10 amino acids long. Binds to DNA in a double-stranded, site-specific manner.</text>
</comment>
<comment type="catalytic activity">
    <reaction evidence="1">
        <text>Hydrolysis of proteins in presence of ATP.</text>
        <dbReference type="EC" id="3.4.21.53"/>
    </reaction>
</comment>
<comment type="subunit">
    <text evidence="1">Homohexamer. Organized in a ring with a central cavity.</text>
</comment>
<comment type="subcellular location">
    <subcellularLocation>
        <location evidence="1">Cytoplasm</location>
    </subcellularLocation>
</comment>
<comment type="induction">
    <text evidence="1">By heat shock.</text>
</comment>
<comment type="similarity">
    <text evidence="1">Belongs to the peptidase S16 family.</text>
</comment>
<feature type="chain" id="PRO_0000396570" description="Lon protease">
    <location>
        <begin position="1"/>
        <end position="816"/>
    </location>
</feature>
<feature type="domain" description="Lon N-terminal" evidence="3">
    <location>
        <begin position="27"/>
        <end position="221"/>
    </location>
</feature>
<feature type="domain" description="Lon proteolytic" evidence="2">
    <location>
        <begin position="608"/>
        <end position="789"/>
    </location>
</feature>
<feature type="region of interest" description="Disordered" evidence="4">
    <location>
        <begin position="795"/>
        <end position="816"/>
    </location>
</feature>
<feature type="compositionally biased region" description="Low complexity" evidence="4">
    <location>
        <begin position="800"/>
        <end position="809"/>
    </location>
</feature>
<feature type="active site" evidence="1">
    <location>
        <position position="695"/>
    </location>
</feature>
<feature type="active site" evidence="1">
    <location>
        <position position="738"/>
    </location>
</feature>
<feature type="binding site" evidence="1">
    <location>
        <begin position="372"/>
        <end position="379"/>
    </location>
    <ligand>
        <name>ATP</name>
        <dbReference type="ChEBI" id="CHEBI:30616"/>
    </ligand>
</feature>
<proteinExistence type="inferred from homology"/>
<evidence type="ECO:0000255" key="1">
    <source>
        <dbReference type="HAMAP-Rule" id="MF_01973"/>
    </source>
</evidence>
<evidence type="ECO:0000255" key="2">
    <source>
        <dbReference type="PROSITE-ProRule" id="PRU01122"/>
    </source>
</evidence>
<evidence type="ECO:0000255" key="3">
    <source>
        <dbReference type="PROSITE-ProRule" id="PRU01123"/>
    </source>
</evidence>
<evidence type="ECO:0000256" key="4">
    <source>
        <dbReference type="SAM" id="MobiDB-lite"/>
    </source>
</evidence>
<dbReference type="EC" id="3.4.21.53" evidence="1"/>
<dbReference type="EMBL" id="CP001089">
    <property type="protein sequence ID" value="ACD96519.1"/>
    <property type="molecule type" value="Genomic_DNA"/>
</dbReference>
<dbReference type="RefSeq" id="WP_012470848.1">
    <property type="nucleotide sequence ID" value="NC_010814.1"/>
</dbReference>
<dbReference type="SMR" id="B3E7K2"/>
<dbReference type="STRING" id="398767.Glov_2806"/>
<dbReference type="MEROPS" id="S16.001"/>
<dbReference type="KEGG" id="glo:Glov_2806"/>
<dbReference type="eggNOG" id="COG0466">
    <property type="taxonomic scope" value="Bacteria"/>
</dbReference>
<dbReference type="HOGENOM" id="CLU_004109_4_3_7"/>
<dbReference type="OrthoDB" id="9803599at2"/>
<dbReference type="Proteomes" id="UP000002420">
    <property type="component" value="Chromosome"/>
</dbReference>
<dbReference type="GO" id="GO:0005737">
    <property type="term" value="C:cytoplasm"/>
    <property type="evidence" value="ECO:0007669"/>
    <property type="project" value="UniProtKB-SubCell"/>
</dbReference>
<dbReference type="GO" id="GO:0005524">
    <property type="term" value="F:ATP binding"/>
    <property type="evidence" value="ECO:0007669"/>
    <property type="project" value="UniProtKB-UniRule"/>
</dbReference>
<dbReference type="GO" id="GO:0016887">
    <property type="term" value="F:ATP hydrolysis activity"/>
    <property type="evidence" value="ECO:0007669"/>
    <property type="project" value="UniProtKB-UniRule"/>
</dbReference>
<dbReference type="GO" id="GO:0004176">
    <property type="term" value="F:ATP-dependent peptidase activity"/>
    <property type="evidence" value="ECO:0007669"/>
    <property type="project" value="UniProtKB-UniRule"/>
</dbReference>
<dbReference type="GO" id="GO:0043565">
    <property type="term" value="F:sequence-specific DNA binding"/>
    <property type="evidence" value="ECO:0007669"/>
    <property type="project" value="UniProtKB-UniRule"/>
</dbReference>
<dbReference type="GO" id="GO:0004252">
    <property type="term" value="F:serine-type endopeptidase activity"/>
    <property type="evidence" value="ECO:0007669"/>
    <property type="project" value="UniProtKB-UniRule"/>
</dbReference>
<dbReference type="GO" id="GO:0034605">
    <property type="term" value="P:cellular response to heat"/>
    <property type="evidence" value="ECO:0007669"/>
    <property type="project" value="UniProtKB-UniRule"/>
</dbReference>
<dbReference type="GO" id="GO:0006515">
    <property type="term" value="P:protein quality control for misfolded or incompletely synthesized proteins"/>
    <property type="evidence" value="ECO:0007669"/>
    <property type="project" value="UniProtKB-UniRule"/>
</dbReference>
<dbReference type="CDD" id="cd19500">
    <property type="entry name" value="RecA-like_Lon"/>
    <property type="match status" value="1"/>
</dbReference>
<dbReference type="FunFam" id="3.40.50.300:FF:000382">
    <property type="entry name" value="Lon protease homolog 2, peroxisomal"/>
    <property type="match status" value="1"/>
</dbReference>
<dbReference type="Gene3D" id="1.10.8.60">
    <property type="match status" value="1"/>
</dbReference>
<dbReference type="Gene3D" id="1.20.5.5270">
    <property type="match status" value="1"/>
</dbReference>
<dbReference type="Gene3D" id="1.20.58.1480">
    <property type="match status" value="1"/>
</dbReference>
<dbReference type="Gene3D" id="3.30.230.10">
    <property type="match status" value="1"/>
</dbReference>
<dbReference type="Gene3D" id="2.30.130.40">
    <property type="entry name" value="LON domain-like"/>
    <property type="match status" value="1"/>
</dbReference>
<dbReference type="Gene3D" id="3.40.50.300">
    <property type="entry name" value="P-loop containing nucleotide triphosphate hydrolases"/>
    <property type="match status" value="1"/>
</dbReference>
<dbReference type="HAMAP" id="MF_01973">
    <property type="entry name" value="lon_bact"/>
    <property type="match status" value="1"/>
</dbReference>
<dbReference type="InterPro" id="IPR003593">
    <property type="entry name" value="AAA+_ATPase"/>
</dbReference>
<dbReference type="InterPro" id="IPR003959">
    <property type="entry name" value="ATPase_AAA_core"/>
</dbReference>
<dbReference type="InterPro" id="IPR027543">
    <property type="entry name" value="Lon_bac"/>
</dbReference>
<dbReference type="InterPro" id="IPR004815">
    <property type="entry name" value="Lon_bac/euk-typ"/>
</dbReference>
<dbReference type="InterPro" id="IPR054594">
    <property type="entry name" value="Lon_lid"/>
</dbReference>
<dbReference type="InterPro" id="IPR008269">
    <property type="entry name" value="Lon_proteolytic"/>
</dbReference>
<dbReference type="InterPro" id="IPR027065">
    <property type="entry name" value="Lon_Prtase"/>
</dbReference>
<dbReference type="InterPro" id="IPR003111">
    <property type="entry name" value="Lon_prtase_N"/>
</dbReference>
<dbReference type="InterPro" id="IPR046336">
    <property type="entry name" value="Lon_prtase_N_sf"/>
</dbReference>
<dbReference type="InterPro" id="IPR027417">
    <property type="entry name" value="P-loop_NTPase"/>
</dbReference>
<dbReference type="InterPro" id="IPR008268">
    <property type="entry name" value="Peptidase_S16_AS"/>
</dbReference>
<dbReference type="InterPro" id="IPR015947">
    <property type="entry name" value="PUA-like_sf"/>
</dbReference>
<dbReference type="InterPro" id="IPR020568">
    <property type="entry name" value="Ribosomal_Su5_D2-typ_SF"/>
</dbReference>
<dbReference type="InterPro" id="IPR014721">
    <property type="entry name" value="Ribsml_uS5_D2-typ_fold_subgr"/>
</dbReference>
<dbReference type="NCBIfam" id="TIGR00763">
    <property type="entry name" value="lon"/>
    <property type="match status" value="1"/>
</dbReference>
<dbReference type="NCBIfam" id="NF008053">
    <property type="entry name" value="PRK10787.1"/>
    <property type="match status" value="1"/>
</dbReference>
<dbReference type="PANTHER" id="PTHR10046">
    <property type="entry name" value="ATP DEPENDENT LON PROTEASE FAMILY MEMBER"/>
    <property type="match status" value="1"/>
</dbReference>
<dbReference type="Pfam" id="PF00004">
    <property type="entry name" value="AAA"/>
    <property type="match status" value="1"/>
</dbReference>
<dbReference type="Pfam" id="PF05362">
    <property type="entry name" value="Lon_C"/>
    <property type="match status" value="1"/>
</dbReference>
<dbReference type="Pfam" id="PF22667">
    <property type="entry name" value="Lon_lid"/>
    <property type="match status" value="1"/>
</dbReference>
<dbReference type="Pfam" id="PF02190">
    <property type="entry name" value="LON_substr_bdg"/>
    <property type="match status" value="1"/>
</dbReference>
<dbReference type="PIRSF" id="PIRSF001174">
    <property type="entry name" value="Lon_proteas"/>
    <property type="match status" value="1"/>
</dbReference>
<dbReference type="PRINTS" id="PR00830">
    <property type="entry name" value="ENDOLAPTASE"/>
</dbReference>
<dbReference type="SMART" id="SM00382">
    <property type="entry name" value="AAA"/>
    <property type="match status" value="1"/>
</dbReference>
<dbReference type="SMART" id="SM00464">
    <property type="entry name" value="LON"/>
    <property type="match status" value="1"/>
</dbReference>
<dbReference type="SUPFAM" id="SSF52540">
    <property type="entry name" value="P-loop containing nucleoside triphosphate hydrolases"/>
    <property type="match status" value="1"/>
</dbReference>
<dbReference type="SUPFAM" id="SSF88697">
    <property type="entry name" value="PUA domain-like"/>
    <property type="match status" value="1"/>
</dbReference>
<dbReference type="SUPFAM" id="SSF54211">
    <property type="entry name" value="Ribosomal protein S5 domain 2-like"/>
    <property type="match status" value="1"/>
</dbReference>
<dbReference type="PROSITE" id="PS51787">
    <property type="entry name" value="LON_N"/>
    <property type="match status" value="1"/>
</dbReference>
<dbReference type="PROSITE" id="PS51786">
    <property type="entry name" value="LON_PROTEOLYTIC"/>
    <property type="match status" value="1"/>
</dbReference>
<dbReference type="PROSITE" id="PS01046">
    <property type="entry name" value="LON_SER"/>
    <property type="match status" value="1"/>
</dbReference>
<name>LON_TRIL1</name>
<accession>B3E7K2</accession>
<reference key="1">
    <citation type="submission" date="2008-05" db="EMBL/GenBank/DDBJ databases">
        <title>Complete sequence of chromosome of Geobacter lovleyi SZ.</title>
        <authorList>
            <consortium name="US DOE Joint Genome Institute"/>
            <person name="Lucas S."/>
            <person name="Copeland A."/>
            <person name="Lapidus A."/>
            <person name="Glavina del Rio T."/>
            <person name="Dalin E."/>
            <person name="Tice H."/>
            <person name="Bruce D."/>
            <person name="Goodwin L."/>
            <person name="Pitluck S."/>
            <person name="Chertkov O."/>
            <person name="Meincke L."/>
            <person name="Brettin T."/>
            <person name="Detter J.C."/>
            <person name="Han C."/>
            <person name="Tapia R."/>
            <person name="Kuske C.R."/>
            <person name="Schmutz J."/>
            <person name="Larimer F."/>
            <person name="Land M."/>
            <person name="Hauser L."/>
            <person name="Kyrpides N."/>
            <person name="Mikhailova N."/>
            <person name="Sung Y."/>
            <person name="Fletcher K.E."/>
            <person name="Ritalahti K.M."/>
            <person name="Loeffler F.E."/>
            <person name="Richardson P."/>
        </authorList>
    </citation>
    <scope>NUCLEOTIDE SEQUENCE [LARGE SCALE GENOMIC DNA]</scope>
    <source>
        <strain>ATCC BAA-1151 / DSM 17278 / SZ</strain>
    </source>
</reference>
<protein>
    <recommendedName>
        <fullName evidence="1">Lon protease</fullName>
        <ecNumber evidence="1">3.4.21.53</ecNumber>
    </recommendedName>
    <alternativeName>
        <fullName evidence="1">ATP-dependent protease La</fullName>
    </alternativeName>
</protein>
<gene>
    <name evidence="1" type="primary">lon</name>
    <name type="ordered locus">Glov_2806</name>
</gene>